<comment type="function">
    <text evidence="2">Negative regulator of the multidrug operon emrAB.</text>
</comment>
<comment type="induction">
    <text>Autoregulated.</text>
</comment>
<reference key="1">
    <citation type="journal article" date="1991" name="J. Bacteriol.">
        <title>Nucleotide sequence of the Escherichia coli regulatory gene mprA and construction and characterization of mprA-deficient mutants.</title>
        <authorList>
            <person name="del Castillo I."/>
            <person name="Gonzalez-Pastor J.E."/>
            <person name="San Millan J.L."/>
            <person name="Moreno F."/>
        </authorList>
    </citation>
    <scope>NUCLEOTIDE SEQUENCE [GENOMIC DNA]</scope>
    <source>
        <strain>K12</strain>
    </source>
</reference>
<reference key="2">
    <citation type="journal article" date="1997" name="DNA Res.">
        <title>Construction of a contiguous 874-kb sequence of the Escherichia coli-K12 genome corresponding to 50.0-68.8 min on the linkage map and analysis of its sequence features.</title>
        <authorList>
            <person name="Yamamoto Y."/>
            <person name="Aiba H."/>
            <person name="Baba T."/>
            <person name="Hayashi K."/>
            <person name="Inada T."/>
            <person name="Isono K."/>
            <person name="Itoh T."/>
            <person name="Kimura S."/>
            <person name="Kitagawa M."/>
            <person name="Makino K."/>
            <person name="Miki T."/>
            <person name="Mitsuhashi N."/>
            <person name="Mizobuchi K."/>
            <person name="Mori H."/>
            <person name="Nakade S."/>
            <person name="Nakamura Y."/>
            <person name="Nashimoto H."/>
            <person name="Oshima T."/>
            <person name="Oyama S."/>
            <person name="Saito N."/>
            <person name="Sampei G."/>
            <person name="Satoh Y."/>
            <person name="Sivasundaram S."/>
            <person name="Tagami H."/>
            <person name="Takahashi H."/>
            <person name="Takeda J."/>
            <person name="Takemoto K."/>
            <person name="Uehara K."/>
            <person name="Wada C."/>
            <person name="Yamagata S."/>
            <person name="Horiuchi T."/>
        </authorList>
    </citation>
    <scope>NUCLEOTIDE SEQUENCE [LARGE SCALE GENOMIC DNA]</scope>
    <source>
        <strain>K12 / W3110 / ATCC 27325 / DSM 5911</strain>
    </source>
</reference>
<reference key="3">
    <citation type="journal article" date="1997" name="Science">
        <title>The complete genome sequence of Escherichia coli K-12.</title>
        <authorList>
            <person name="Blattner F.R."/>
            <person name="Plunkett G. III"/>
            <person name="Bloch C.A."/>
            <person name="Perna N.T."/>
            <person name="Burland V."/>
            <person name="Riley M."/>
            <person name="Collado-Vides J."/>
            <person name="Glasner J.D."/>
            <person name="Rode C.K."/>
            <person name="Mayhew G.F."/>
            <person name="Gregor J."/>
            <person name="Davis N.W."/>
            <person name="Kirkpatrick H.A."/>
            <person name="Goeden M.A."/>
            <person name="Rose D.J."/>
            <person name="Mau B."/>
            <person name="Shao Y."/>
        </authorList>
    </citation>
    <scope>NUCLEOTIDE SEQUENCE [LARGE SCALE GENOMIC DNA]</scope>
    <source>
        <strain>K12 / MG1655 / ATCC 47076</strain>
    </source>
</reference>
<reference key="4">
    <citation type="journal article" date="2006" name="Mol. Syst. Biol.">
        <title>Highly accurate genome sequences of Escherichia coli K-12 strains MG1655 and W3110.</title>
        <authorList>
            <person name="Hayashi K."/>
            <person name="Morooka N."/>
            <person name="Yamamoto Y."/>
            <person name="Fujita K."/>
            <person name="Isono K."/>
            <person name="Choi S."/>
            <person name="Ohtsubo E."/>
            <person name="Baba T."/>
            <person name="Wanner B.L."/>
            <person name="Mori H."/>
            <person name="Horiuchi T."/>
        </authorList>
    </citation>
    <scope>NUCLEOTIDE SEQUENCE [LARGE SCALE GENOMIC DNA]</scope>
    <source>
        <strain>K12 / W3110 / ATCC 27325 / DSM 5911</strain>
    </source>
</reference>
<reference key="5">
    <citation type="journal article" date="1992" name="Proc. Natl. Acad. Sci. U.S.A.">
        <title>Emr, an Escherichia coli locus for multidrug resistance.</title>
        <authorList>
            <person name="Lomovskaya O."/>
            <person name="Lewis K."/>
        </authorList>
    </citation>
    <scope>NUCLEOTIDE SEQUENCE [GENOMIC DNA] OF 152-176</scope>
</reference>
<reference key="6">
    <citation type="journal article" date="1995" name="J. Bacteriol.">
        <title>EmrR is a negative regulator of the Escherichia coli multidrug resistance pump EmrAB.</title>
        <authorList>
            <person name="Lomovskaya O."/>
            <person name="Lewis K."/>
            <person name="Matin A."/>
        </authorList>
    </citation>
    <scope>NUCLEOTIDE SEQUENCE [GENOMIC DNA] OF 1-5</scope>
    <scope>FUNCTION</scope>
    <source>
        <strain>K12</strain>
    </source>
</reference>
<name>MPRA_ECOLI</name>
<gene>
    <name type="primary">mprA</name>
    <name type="synonym">emrR</name>
    <name type="ordered locus">b2684</name>
    <name type="ordered locus">JW2659</name>
</gene>
<organism>
    <name type="scientific">Escherichia coli (strain K12)</name>
    <dbReference type="NCBI Taxonomy" id="83333"/>
    <lineage>
        <taxon>Bacteria</taxon>
        <taxon>Pseudomonadati</taxon>
        <taxon>Pseudomonadota</taxon>
        <taxon>Gammaproteobacteria</taxon>
        <taxon>Enterobacterales</taxon>
        <taxon>Enterobacteriaceae</taxon>
        <taxon>Escherichia</taxon>
    </lineage>
</organism>
<evidence type="ECO:0000255" key="1">
    <source>
        <dbReference type="PROSITE-ProRule" id="PRU00345"/>
    </source>
</evidence>
<evidence type="ECO:0000269" key="2">
    <source>
    </source>
</evidence>
<protein>
    <recommendedName>
        <fullName>Transcriptional repressor MprA</fullName>
    </recommendedName>
    <alternativeName>
        <fullName>Protein EmrR</fullName>
    </alternativeName>
</protein>
<feature type="chain" id="PRO_0000054373" description="Transcriptional repressor MprA">
    <location>
        <begin position="1"/>
        <end position="176"/>
    </location>
</feature>
<feature type="domain" description="HTH marR-type" evidence="1">
    <location>
        <begin position="26"/>
        <end position="160"/>
    </location>
</feature>
<dbReference type="EMBL" id="X54151">
    <property type="protein sequence ID" value="CAA38090.1"/>
    <property type="molecule type" value="Genomic_DNA"/>
</dbReference>
<dbReference type="EMBL" id="U00096">
    <property type="protein sequence ID" value="AAC75731.1"/>
    <property type="molecule type" value="Genomic_DNA"/>
</dbReference>
<dbReference type="EMBL" id="AP009048">
    <property type="protein sequence ID" value="BAA16546.1"/>
    <property type="molecule type" value="Genomic_DNA"/>
</dbReference>
<dbReference type="EMBL" id="M86657">
    <property type="status" value="NOT_ANNOTATED_CDS"/>
    <property type="molecule type" value="Genomic_DNA"/>
</dbReference>
<dbReference type="EMBL" id="U19993">
    <property type="status" value="NOT_ANNOTATED_CDS"/>
    <property type="molecule type" value="Genomic_DNA"/>
</dbReference>
<dbReference type="PIR" id="S14473">
    <property type="entry name" value="S14473"/>
</dbReference>
<dbReference type="RefSeq" id="NP_417169.1">
    <property type="nucleotide sequence ID" value="NC_000913.3"/>
</dbReference>
<dbReference type="RefSeq" id="WP_000378442.1">
    <property type="nucleotide sequence ID" value="NZ_STEB01000042.1"/>
</dbReference>
<dbReference type="SMR" id="P0ACR9"/>
<dbReference type="BioGRID" id="4262945">
    <property type="interactions" value="116"/>
</dbReference>
<dbReference type="DIP" id="DIP-10248N"/>
<dbReference type="FunCoup" id="P0ACR9">
    <property type="interactions" value="236"/>
</dbReference>
<dbReference type="IntAct" id="P0ACR9">
    <property type="interactions" value="11"/>
</dbReference>
<dbReference type="STRING" id="511145.b2684"/>
<dbReference type="CARD" id="ARO:3000516">
    <property type="molecule name" value="emrR"/>
    <property type="mechanism identifier" value="ARO:0010000"/>
    <property type="mechanism name" value="antibiotic efflux"/>
</dbReference>
<dbReference type="jPOST" id="P0ACR9"/>
<dbReference type="PaxDb" id="511145-b2684"/>
<dbReference type="EnsemblBacteria" id="AAC75731">
    <property type="protein sequence ID" value="AAC75731"/>
    <property type="gene ID" value="b2684"/>
</dbReference>
<dbReference type="GeneID" id="93779327"/>
<dbReference type="GeneID" id="945282"/>
<dbReference type="KEGG" id="ecj:JW2659"/>
<dbReference type="KEGG" id="eco:b2684"/>
<dbReference type="KEGG" id="ecoc:C3026_14780"/>
<dbReference type="PATRIC" id="fig|1411691.4.peg.4056"/>
<dbReference type="EchoBASE" id="EB0598"/>
<dbReference type="eggNOG" id="COG1846">
    <property type="taxonomic scope" value="Bacteria"/>
</dbReference>
<dbReference type="HOGENOM" id="CLU_083287_17_1_6"/>
<dbReference type="InParanoid" id="P0ACR9"/>
<dbReference type="OMA" id="GRWWVLI"/>
<dbReference type="OrthoDB" id="5947517at2"/>
<dbReference type="PhylomeDB" id="P0ACR9"/>
<dbReference type="BioCyc" id="EcoCyc:EG10603-MONOMER"/>
<dbReference type="PHI-base" id="PHI:5407"/>
<dbReference type="PHI-base" id="PHI:7646"/>
<dbReference type="PRO" id="PR:P0ACR9"/>
<dbReference type="Proteomes" id="UP000000625">
    <property type="component" value="Chromosome"/>
</dbReference>
<dbReference type="GO" id="GO:0005829">
    <property type="term" value="C:cytosol"/>
    <property type="evidence" value="ECO:0000314"/>
    <property type="project" value="EcoCyc"/>
</dbReference>
<dbReference type="GO" id="GO:0003677">
    <property type="term" value="F:DNA binding"/>
    <property type="evidence" value="ECO:0000314"/>
    <property type="project" value="EcoCyc"/>
</dbReference>
<dbReference type="GO" id="GO:0003700">
    <property type="term" value="F:DNA-binding transcription factor activity"/>
    <property type="evidence" value="ECO:0007669"/>
    <property type="project" value="InterPro"/>
</dbReference>
<dbReference type="GO" id="GO:0006351">
    <property type="term" value="P:DNA-templated transcription"/>
    <property type="evidence" value="ECO:0000314"/>
    <property type="project" value="EcoCyc"/>
</dbReference>
<dbReference type="GO" id="GO:0045892">
    <property type="term" value="P:negative regulation of DNA-templated transcription"/>
    <property type="evidence" value="ECO:0000315"/>
    <property type="project" value="EcoCyc"/>
</dbReference>
<dbReference type="GO" id="GO:0006355">
    <property type="term" value="P:regulation of DNA-templated transcription"/>
    <property type="evidence" value="ECO:0000318"/>
    <property type="project" value="GO_Central"/>
</dbReference>
<dbReference type="GO" id="GO:0046677">
    <property type="term" value="P:response to antibiotic"/>
    <property type="evidence" value="ECO:0000315"/>
    <property type="project" value="EcoCyc"/>
</dbReference>
<dbReference type="GO" id="GO:0006950">
    <property type="term" value="P:response to stress"/>
    <property type="evidence" value="ECO:0000318"/>
    <property type="project" value="GO_Central"/>
</dbReference>
<dbReference type="FunFam" id="1.10.10.10:FF:000111">
    <property type="entry name" value="Transcriptional repressor MprA"/>
    <property type="match status" value="1"/>
</dbReference>
<dbReference type="Gene3D" id="1.10.10.10">
    <property type="entry name" value="Winged helix-like DNA-binding domain superfamily/Winged helix DNA-binding domain"/>
    <property type="match status" value="1"/>
</dbReference>
<dbReference type="InterPro" id="IPR000835">
    <property type="entry name" value="HTH_MarR-typ"/>
</dbReference>
<dbReference type="InterPro" id="IPR023187">
    <property type="entry name" value="Tscrpt_reg_MarR-type_CS"/>
</dbReference>
<dbReference type="InterPro" id="IPR036388">
    <property type="entry name" value="WH-like_DNA-bd_sf"/>
</dbReference>
<dbReference type="InterPro" id="IPR036390">
    <property type="entry name" value="WH_DNA-bd_sf"/>
</dbReference>
<dbReference type="NCBIfam" id="NF008122">
    <property type="entry name" value="PRK10870.1"/>
    <property type="match status" value="1"/>
</dbReference>
<dbReference type="PANTHER" id="PTHR42756">
    <property type="entry name" value="TRANSCRIPTIONAL REGULATOR, MARR"/>
    <property type="match status" value="1"/>
</dbReference>
<dbReference type="PANTHER" id="PTHR42756:SF1">
    <property type="entry name" value="TRANSCRIPTIONAL REPRESSOR OF EMRAB OPERON"/>
    <property type="match status" value="1"/>
</dbReference>
<dbReference type="Pfam" id="PF01047">
    <property type="entry name" value="MarR"/>
    <property type="match status" value="1"/>
</dbReference>
<dbReference type="PRINTS" id="PR00598">
    <property type="entry name" value="HTHMARR"/>
</dbReference>
<dbReference type="SMART" id="SM00347">
    <property type="entry name" value="HTH_MARR"/>
    <property type="match status" value="1"/>
</dbReference>
<dbReference type="SUPFAM" id="SSF46785">
    <property type="entry name" value="Winged helix' DNA-binding domain"/>
    <property type="match status" value="1"/>
</dbReference>
<dbReference type="PROSITE" id="PS01117">
    <property type="entry name" value="HTH_MARR_1"/>
    <property type="match status" value="1"/>
</dbReference>
<dbReference type="PROSITE" id="PS50995">
    <property type="entry name" value="HTH_MARR_2"/>
    <property type="match status" value="1"/>
</dbReference>
<sequence>MDSSFTPIEQMLKFRASRHEDFPYQEILLTRLCMHMQSKLLENRNKMLKAQGINETLFMALITLESQENHSIQPSELSCALGSSRTNATRIADELEKRGWIERRESDNDRRCLHLQLTEKGHEFLREVLPPQHNCLHQLWSALSTTEKDQLEQITRKLLSRLDQMEQDGVVLEAMS</sequence>
<accession>P0ACR9</accession>
<accession>P24201</accession>
<accession>P77027</accession>
<proteinExistence type="evidence at transcript level"/>
<keyword id="KW-0238">DNA-binding</keyword>
<keyword id="KW-1185">Reference proteome</keyword>
<keyword id="KW-0678">Repressor</keyword>
<keyword id="KW-0804">Transcription</keyword>
<keyword id="KW-0805">Transcription regulation</keyword>